<sequence>MSTPGVNASASLSPDRLNSPVTIPAVMFIFGVVGNLVAIVVLCKSRKEQKETTFYTLVCGLAVTDLLGTLLVSPVTIATYMKGQWPGGQPLCEYSTFILLFFSLSGLSIICAMSVERYLAINHAYFYSHYVDKRLAGLTLFAVYASNVLFCALPNMGLGSSRLQYPDTWCFIDWTTNVTAHAAYSYMYAGFSSFLILATVLCNVLVCGALLRMHRQFMRRTSLGTEQHHAAAAAVTSVASRGHPAASPALPRLSDFRRRRSFRRIAGAEIQMVILLIATSLVVLICSIPLVVRVFVNQLYQPSLEREVSKNPDLQAIRIASVNPILDPWIYILLRKTVLSKAIEKIKCLFCRIGGSRRERSGQHCSDSQRTSSAMSGHSRSFISRELKEISSTSQTLLPDLSLPDLSENGLGGRNLLPGVPGMGLAQEDTTSLRTLRISETSDSSQGQDSESVLLVDEAGGSGRAGPAPKGSSLQVTFPSETLNLSEKCI</sequence>
<name>PE2R4_PANTR</name>
<organism>
    <name type="scientific">Pan troglodytes</name>
    <name type="common">Chimpanzee</name>
    <dbReference type="NCBI Taxonomy" id="9598"/>
    <lineage>
        <taxon>Eukaryota</taxon>
        <taxon>Metazoa</taxon>
        <taxon>Chordata</taxon>
        <taxon>Craniata</taxon>
        <taxon>Vertebrata</taxon>
        <taxon>Euteleostomi</taxon>
        <taxon>Mammalia</taxon>
        <taxon>Eutheria</taxon>
        <taxon>Euarchontoglires</taxon>
        <taxon>Primates</taxon>
        <taxon>Haplorrhini</taxon>
        <taxon>Catarrhini</taxon>
        <taxon>Hominidae</taxon>
        <taxon>Pan</taxon>
    </lineage>
</organism>
<reference key="1">
    <citation type="submission" date="2001-08" db="EMBL/GenBank/DDBJ databases">
        <title>Pan troglodytes prostaglandin E2 subtype EP4 receptor.</title>
        <authorList>
            <person name="Smock S.L."/>
            <person name="Castleberry T.A."/>
            <person name="Lu B."/>
            <person name="Owen T.A."/>
        </authorList>
    </citation>
    <scope>NUCLEOTIDE SEQUENCE [MRNA]</scope>
</reference>
<gene>
    <name type="primary">PTGER4</name>
</gene>
<dbReference type="EMBL" id="AY052641">
    <property type="protein sequence ID" value="AAL15039.1"/>
    <property type="molecule type" value="mRNA"/>
</dbReference>
<dbReference type="RefSeq" id="NP_001009078.1">
    <property type="nucleotide sequence ID" value="NM_001009078.1"/>
</dbReference>
<dbReference type="RefSeq" id="XP_009447464.1">
    <property type="nucleotide sequence ID" value="XM_009449189.2"/>
</dbReference>
<dbReference type="RefSeq" id="XP_063666173.1">
    <property type="nucleotide sequence ID" value="XM_063810103.1"/>
</dbReference>
<dbReference type="SMR" id="Q95KZ0"/>
<dbReference type="FunCoup" id="Q95KZ0">
    <property type="interactions" value="1381"/>
</dbReference>
<dbReference type="STRING" id="9598.ENSPTRP00000028838"/>
<dbReference type="GlyCosmos" id="Q95KZ0">
    <property type="glycosylation" value="1 site, No reported glycans"/>
</dbReference>
<dbReference type="PaxDb" id="9598-ENSPTRP00000028838"/>
<dbReference type="Ensembl" id="ENSPTRT00000031222.3">
    <property type="protein sequence ID" value="ENSPTRP00000028838.2"/>
    <property type="gene ID" value="ENSPTRG00000016819.3"/>
</dbReference>
<dbReference type="GeneID" id="450195"/>
<dbReference type="CTD" id="5734"/>
<dbReference type="VGNC" id="VGNC:4139">
    <property type="gene designation" value="PTGER4"/>
</dbReference>
<dbReference type="eggNOG" id="KOG3656">
    <property type="taxonomic scope" value="Eukaryota"/>
</dbReference>
<dbReference type="GeneTree" id="ENSGT01050000244902"/>
<dbReference type="HOGENOM" id="CLU_045991_0_2_1"/>
<dbReference type="InParanoid" id="Q95KZ0"/>
<dbReference type="OMA" id="VGHVVWR"/>
<dbReference type="OrthoDB" id="12042at9604"/>
<dbReference type="TreeFam" id="TF324982"/>
<dbReference type="Proteomes" id="UP000002277">
    <property type="component" value="Chromosome 5"/>
</dbReference>
<dbReference type="Bgee" id="ENSPTRG00000016819">
    <property type="expression patterns" value="Expressed in thymus and 15 other cell types or tissues"/>
</dbReference>
<dbReference type="GO" id="GO:0005886">
    <property type="term" value="C:plasma membrane"/>
    <property type="evidence" value="ECO:0000318"/>
    <property type="project" value="GO_Central"/>
</dbReference>
<dbReference type="GO" id="GO:0004957">
    <property type="term" value="F:prostaglandin E receptor activity"/>
    <property type="evidence" value="ECO:0000250"/>
    <property type="project" value="UniProtKB"/>
</dbReference>
<dbReference type="GO" id="GO:0007189">
    <property type="term" value="P:adenylate cyclase-activating G protein-coupled receptor signaling pathway"/>
    <property type="evidence" value="ECO:0000318"/>
    <property type="project" value="GO_Central"/>
</dbReference>
<dbReference type="GO" id="GO:0007193">
    <property type="term" value="P:adenylate cyclase-inhibiting G protein-coupled receptor signaling pathway"/>
    <property type="evidence" value="ECO:0007669"/>
    <property type="project" value="Ensembl"/>
</dbReference>
<dbReference type="GO" id="GO:0007188">
    <property type="term" value="P:adenylate cyclase-modulating G protein-coupled receptor signaling pathway"/>
    <property type="evidence" value="ECO:0000250"/>
    <property type="project" value="UniProtKB"/>
</dbReference>
<dbReference type="GO" id="GO:0071380">
    <property type="term" value="P:cellular response to prostaglandin E stimulus"/>
    <property type="evidence" value="ECO:0000318"/>
    <property type="project" value="GO_Central"/>
</dbReference>
<dbReference type="GO" id="GO:0006955">
    <property type="term" value="P:immune response"/>
    <property type="evidence" value="ECO:0007669"/>
    <property type="project" value="Ensembl"/>
</dbReference>
<dbReference type="GO" id="GO:0006954">
    <property type="term" value="P:inflammatory response"/>
    <property type="evidence" value="ECO:0000318"/>
    <property type="project" value="GO_Central"/>
</dbReference>
<dbReference type="GO" id="GO:2000420">
    <property type="term" value="P:negative regulation of eosinophil extravasation"/>
    <property type="evidence" value="ECO:0000250"/>
    <property type="project" value="UniProtKB"/>
</dbReference>
<dbReference type="GO" id="GO:0050728">
    <property type="term" value="P:negative regulation of inflammatory response"/>
    <property type="evidence" value="ECO:0000250"/>
    <property type="project" value="UniProtKB"/>
</dbReference>
<dbReference type="GO" id="GO:0033624">
    <property type="term" value="P:negative regulation of integrin activation"/>
    <property type="evidence" value="ECO:0000250"/>
    <property type="project" value="UniProtKB"/>
</dbReference>
<dbReference type="GO" id="GO:0007204">
    <property type="term" value="P:positive regulation of cytosolic calcium ion concentration"/>
    <property type="evidence" value="ECO:0000318"/>
    <property type="project" value="GO_Central"/>
</dbReference>
<dbReference type="GO" id="GO:0009612">
    <property type="term" value="P:response to mechanical stimulus"/>
    <property type="evidence" value="ECO:0007669"/>
    <property type="project" value="Ensembl"/>
</dbReference>
<dbReference type="CDD" id="cd15142">
    <property type="entry name" value="7tmA_PGE2_EP4"/>
    <property type="match status" value="1"/>
</dbReference>
<dbReference type="FunFam" id="1.20.1070.10:FF:000101">
    <property type="entry name" value="Prostaglandin E2 receptor EP4 subtype"/>
    <property type="match status" value="1"/>
</dbReference>
<dbReference type="Gene3D" id="1.20.1070.10">
    <property type="entry name" value="Rhodopsin 7-helix transmembrane proteins"/>
    <property type="match status" value="1"/>
</dbReference>
<dbReference type="InterPro" id="IPR000276">
    <property type="entry name" value="GPCR_Rhodpsn"/>
</dbReference>
<dbReference type="InterPro" id="IPR017452">
    <property type="entry name" value="GPCR_Rhodpsn_7TM"/>
</dbReference>
<dbReference type="InterPro" id="IPR001758">
    <property type="entry name" value="Prost_EP4_rcpt"/>
</dbReference>
<dbReference type="InterPro" id="IPR008365">
    <property type="entry name" value="Prostanoid_rcpt"/>
</dbReference>
<dbReference type="InterPro" id="IPR001244">
    <property type="entry name" value="Prostglndn_DP_rcpt"/>
</dbReference>
<dbReference type="PANTHER" id="PTHR11866">
    <property type="entry name" value="G-PROTEIN COUPLED RECEPTOR FAMILY 1 MEMBER"/>
    <property type="match status" value="1"/>
</dbReference>
<dbReference type="PANTHER" id="PTHR11866:SF6">
    <property type="entry name" value="PROSTAGLANDIN E2 RECEPTOR EP4 SUBTYPE"/>
    <property type="match status" value="1"/>
</dbReference>
<dbReference type="Pfam" id="PF00001">
    <property type="entry name" value="7tm_1"/>
    <property type="match status" value="1"/>
</dbReference>
<dbReference type="PRINTS" id="PR00237">
    <property type="entry name" value="GPCRRHODOPSN"/>
</dbReference>
<dbReference type="PRINTS" id="PR00428">
    <property type="entry name" value="PROSTAGLNDNR"/>
</dbReference>
<dbReference type="PRINTS" id="PR01788">
    <property type="entry name" value="PROSTANOIDR"/>
</dbReference>
<dbReference type="PRINTS" id="PR00586">
    <property type="entry name" value="PRSTNOIDEP4R"/>
</dbReference>
<dbReference type="SUPFAM" id="SSF81321">
    <property type="entry name" value="Family A G protein-coupled receptor-like"/>
    <property type="match status" value="1"/>
</dbReference>
<dbReference type="PROSITE" id="PS00237">
    <property type="entry name" value="G_PROTEIN_RECEP_F1_1"/>
    <property type="match status" value="1"/>
</dbReference>
<dbReference type="PROSITE" id="PS50262">
    <property type="entry name" value="G_PROTEIN_RECEP_F1_2"/>
    <property type="match status" value="1"/>
</dbReference>
<accession>Q95KZ0</accession>
<comment type="function">
    <text evidence="1">Receptor for prostaglandin E2 (PGE2). The activity of this receptor is mediated by G(s) proteins that stimulate adenylate cyclase. Has a relaxing effect on smooth muscle. May play an important role in regulating renal hemodynamics, intestinal epithelial transport, adrenal aldosterone secretion, and uterine function (By similarity).</text>
</comment>
<comment type="subunit">
    <text evidence="2">Interacts with FEM1A.</text>
</comment>
<comment type="subcellular location">
    <subcellularLocation>
        <location>Cell membrane</location>
        <topology>Multi-pass membrane protein</topology>
    </subcellularLocation>
</comment>
<comment type="PTM">
    <text evidence="1">Phosphorylation mediates agonist-mediated desensitization by promoting cytoplasmic retention.</text>
</comment>
<comment type="similarity">
    <text evidence="4">Belongs to the G-protein coupled receptor 1 family.</text>
</comment>
<keyword id="KW-1003">Cell membrane</keyword>
<keyword id="KW-1015">Disulfide bond</keyword>
<keyword id="KW-0297">G-protein coupled receptor</keyword>
<keyword id="KW-0325">Glycoprotein</keyword>
<keyword id="KW-0472">Membrane</keyword>
<keyword id="KW-0597">Phosphoprotein</keyword>
<keyword id="KW-0675">Receptor</keyword>
<keyword id="KW-1185">Reference proteome</keyword>
<keyword id="KW-0807">Transducer</keyword>
<keyword id="KW-0812">Transmembrane</keyword>
<keyword id="KW-1133">Transmembrane helix</keyword>
<proteinExistence type="evidence at transcript level"/>
<feature type="chain" id="PRO_0000070066" description="Prostaglandin E2 receptor EP4 subtype">
    <location>
        <begin position="1"/>
        <end position="490"/>
    </location>
</feature>
<feature type="topological domain" description="Extracellular" evidence="3">
    <location>
        <begin position="1"/>
        <end position="19"/>
    </location>
</feature>
<feature type="transmembrane region" description="Helical; Name=1" evidence="3">
    <location>
        <begin position="20"/>
        <end position="43"/>
    </location>
</feature>
<feature type="topological domain" description="Cytoplasmic" evidence="3">
    <location>
        <begin position="44"/>
        <end position="55"/>
    </location>
</feature>
<feature type="transmembrane region" description="Helical; Name=2" evidence="3">
    <location>
        <begin position="56"/>
        <end position="79"/>
    </location>
</feature>
<feature type="topological domain" description="Extracellular" evidence="3">
    <location>
        <begin position="80"/>
        <end position="96"/>
    </location>
</feature>
<feature type="transmembrane region" description="Helical; Name=3" evidence="3">
    <location>
        <begin position="97"/>
        <end position="115"/>
    </location>
</feature>
<feature type="topological domain" description="Cytoplasmic" evidence="3">
    <location>
        <begin position="116"/>
        <end position="135"/>
    </location>
</feature>
<feature type="transmembrane region" description="Helical; Name=4" evidence="3">
    <location>
        <begin position="136"/>
        <end position="160"/>
    </location>
</feature>
<feature type="topological domain" description="Extracellular" evidence="3">
    <location>
        <begin position="161"/>
        <end position="184"/>
    </location>
</feature>
<feature type="transmembrane region" description="Helical; Name=5" evidence="3">
    <location>
        <begin position="185"/>
        <end position="211"/>
    </location>
</feature>
<feature type="topological domain" description="Cytoplasmic" evidence="3">
    <location>
        <begin position="212"/>
        <end position="269"/>
    </location>
</feature>
<feature type="transmembrane region" description="Helical; Name=6" evidence="3">
    <location>
        <begin position="270"/>
        <end position="297"/>
    </location>
</feature>
<feature type="topological domain" description="Extracellular" evidence="3">
    <location>
        <begin position="298"/>
        <end position="314"/>
    </location>
</feature>
<feature type="transmembrane region" description="Helical; Name=7" evidence="3">
    <location>
        <begin position="315"/>
        <end position="334"/>
    </location>
</feature>
<feature type="topological domain" description="Cytoplasmic" evidence="3">
    <location>
        <begin position="335"/>
        <end position="490"/>
    </location>
</feature>
<feature type="region of interest" description="Disordered" evidence="5">
    <location>
        <begin position="359"/>
        <end position="378"/>
    </location>
</feature>
<feature type="region of interest" description="Disordered" evidence="5">
    <location>
        <begin position="439"/>
        <end position="477"/>
    </location>
</feature>
<feature type="compositionally biased region" description="Polar residues" evidence="5">
    <location>
        <begin position="363"/>
        <end position="378"/>
    </location>
</feature>
<feature type="compositionally biased region" description="Polar residues" evidence="5">
    <location>
        <begin position="439"/>
        <end position="451"/>
    </location>
</feature>
<feature type="modified residue" description="Phosphoserine" evidence="2">
    <location>
        <position position="376"/>
    </location>
</feature>
<feature type="modified residue" description="Phosphoserine" evidence="2">
    <location>
        <position position="379"/>
    </location>
</feature>
<feature type="modified residue" description="Phosphoserine" evidence="2">
    <location>
        <position position="381"/>
    </location>
</feature>
<feature type="modified residue" description="Phosphoserine" evidence="2">
    <location>
        <position position="384"/>
    </location>
</feature>
<feature type="glycosylation site" description="N-linked (GlcNAc...) asparagine" evidence="3">
    <location>
        <position position="7"/>
    </location>
</feature>
<feature type="disulfide bond" evidence="4">
    <location>
        <begin position="92"/>
        <end position="170"/>
    </location>
</feature>
<protein>
    <recommendedName>
        <fullName>Prostaglandin E2 receptor EP4 subtype</fullName>
        <shortName>PGE receptor EP4 subtype</shortName>
        <shortName>PGE2 receptor EP4 subtype</shortName>
    </recommendedName>
    <alternativeName>
        <fullName>Prostanoid EP4 receptor</fullName>
    </alternativeName>
</protein>
<evidence type="ECO:0000250" key="1"/>
<evidence type="ECO:0000250" key="2">
    <source>
        <dbReference type="UniProtKB" id="P35408"/>
    </source>
</evidence>
<evidence type="ECO:0000255" key="3"/>
<evidence type="ECO:0000255" key="4">
    <source>
        <dbReference type="PROSITE-ProRule" id="PRU00521"/>
    </source>
</evidence>
<evidence type="ECO:0000256" key="5">
    <source>
        <dbReference type="SAM" id="MobiDB-lite"/>
    </source>
</evidence>